<keyword id="KW-0010">Activator</keyword>
<keyword id="KW-0067">ATP-binding</keyword>
<keyword id="KW-0238">DNA-binding</keyword>
<keyword id="KW-0347">Helicase</keyword>
<keyword id="KW-0378">Hydrolase</keyword>
<keyword id="KW-0547">Nucleotide-binding</keyword>
<keyword id="KW-0804">Transcription</keyword>
<keyword id="KW-0805">Transcription regulation</keyword>
<accession>B7NHG5</accession>
<protein>
    <recommendedName>
        <fullName evidence="1">RNA polymerase-associated protein RapA</fullName>
        <ecNumber evidence="1">3.6.4.-</ecNumber>
    </recommendedName>
    <alternativeName>
        <fullName evidence="1">ATP-dependent helicase HepA</fullName>
    </alternativeName>
</protein>
<feature type="chain" id="PRO_1000188171" description="RNA polymerase-associated protein RapA">
    <location>
        <begin position="1"/>
        <end position="968"/>
    </location>
</feature>
<feature type="domain" description="Helicase ATP-binding" evidence="1">
    <location>
        <begin position="164"/>
        <end position="334"/>
    </location>
</feature>
<feature type="domain" description="Helicase C-terminal" evidence="1">
    <location>
        <begin position="490"/>
        <end position="662"/>
    </location>
</feature>
<feature type="short sequence motif" description="DEAH box">
    <location>
        <begin position="280"/>
        <end position="283"/>
    </location>
</feature>
<feature type="binding site" evidence="1">
    <location>
        <begin position="177"/>
        <end position="184"/>
    </location>
    <ligand>
        <name>ATP</name>
        <dbReference type="ChEBI" id="CHEBI:30616"/>
    </ligand>
</feature>
<evidence type="ECO:0000255" key="1">
    <source>
        <dbReference type="HAMAP-Rule" id="MF_01821"/>
    </source>
</evidence>
<proteinExistence type="inferred from homology"/>
<organism>
    <name type="scientific">Escherichia coli O7:K1 (strain IAI39 / ExPEC)</name>
    <dbReference type="NCBI Taxonomy" id="585057"/>
    <lineage>
        <taxon>Bacteria</taxon>
        <taxon>Pseudomonadati</taxon>
        <taxon>Pseudomonadota</taxon>
        <taxon>Gammaproteobacteria</taxon>
        <taxon>Enterobacterales</taxon>
        <taxon>Enterobacteriaceae</taxon>
        <taxon>Escherichia</taxon>
    </lineage>
</organism>
<comment type="function">
    <text evidence="1">Transcription regulator that activates transcription by stimulating RNA polymerase (RNAP) recycling in case of stress conditions such as supercoiled DNA or high salt concentrations. Probably acts by releasing the RNAP, when it is trapped or immobilized on tightly supercoiled DNA. Does not activate transcription on linear DNA. Probably not involved in DNA repair.</text>
</comment>
<comment type="subunit">
    <text evidence="1">Interacts with the RNAP. Has a higher affinity for the core RNAP than for the holoenzyme. Its ATPase activity is stimulated by binding to RNAP.</text>
</comment>
<comment type="similarity">
    <text evidence="1">Belongs to the SNF2/RAD54 helicase family. RapA subfamily.</text>
</comment>
<name>RAPA_ECO7I</name>
<gene>
    <name evidence="1" type="primary">rapA</name>
    <name type="ordered locus">ECIAI39_0062</name>
</gene>
<sequence>MPFTLGQRWISDTESELGLGTVVAVDARTVTLLFPSTGENRLYARSDSPVTRVMFNPGDTITSHDGWQMQVEEVKEENGLLTYIGTRLDTEESGVALREVFLDSKLVFSKPQDRLFAGQIDRMDRFALRYRARKYSSEQFRMPYSGLRGQRTSLIPHQLNIAHDVGRRHAPRVLLADEVGLGKTIEAGMILHQQLLSGAAERVLIIVPETLQHQWLVEMLRRFNLRFALFDDERYAEAQHDAYNPFDTEQLVICSLDFARRSKQRLEHLCEAEWDLLVVDEAHHLVWSEDAPSREYQAIEQLAEHVPGVLLLTATPEQLGMESHFARLRLLDPNRFHDFAQFVEEQKNYRPVADAVAMLLAGNKLSNDELNMLGEMIGEQDIEPLLQAANSDSEDAQSARQELVSMLMDRHGTSRVLFRNTRNGVKGFPKRELHTIKLPLPTQYQTAIKVSGIMGARKSAEDRARDMLYPERIYQEFEGDNATWWNFDPRVEWLMGYLTSHRSQKVLVICAKAATALQLEQVLREREGIRAAVFHEGMSIIERDRAAAWFAEEDTGAQVLLCSEIGSEGRNFQFASHMVMFDLPFNPDLLEQRIGRLDRIGQAHDIQIHVPYLEKTAQSVLVRWYHEGLDAFEHTCPTGRTIYDSVYNDLINYLASPDETEGFDDLIKNCREQHEALKAQLEQGRDRLLEIHSNGGEKAQALAESIEEQDDDTNLIAFAMNLFDIIGINQDDRGDNMIVLTPSDHMLVPDFPGLSEDGITITFDREVALAREDAQFITWEHPLIRNGLDLILSGDTGSSTISLLKNKALPVGTLLVELIYVVEAQAPKQLQLNRFLPPTPVRMLLDKNGNNLAAQVEFETFNRQLNAVNRHTGSKLVNAVQQDVHAILQLGEAQIEKSARALIDAARNEADEKLSAELSRLEALRAVNPNIRDDELTAIESNRQQVMESLDQAGWRLDALRLIVVTHQ</sequence>
<dbReference type="EC" id="3.6.4.-" evidence="1"/>
<dbReference type="EMBL" id="CU928164">
    <property type="protein sequence ID" value="CAR16203.1"/>
    <property type="molecule type" value="Genomic_DNA"/>
</dbReference>
<dbReference type="RefSeq" id="WP_001117001.1">
    <property type="nucleotide sequence ID" value="NC_011750.1"/>
</dbReference>
<dbReference type="RefSeq" id="YP_002406110.1">
    <property type="nucleotide sequence ID" value="NC_011750.1"/>
</dbReference>
<dbReference type="SMR" id="B7NHG5"/>
<dbReference type="STRING" id="585057.ECIAI39_0062"/>
<dbReference type="KEGG" id="ect:ECIAI39_0062"/>
<dbReference type="PATRIC" id="fig|585057.6.peg.66"/>
<dbReference type="HOGENOM" id="CLU_011520_0_0_6"/>
<dbReference type="Proteomes" id="UP000000749">
    <property type="component" value="Chromosome"/>
</dbReference>
<dbReference type="GO" id="GO:0005524">
    <property type="term" value="F:ATP binding"/>
    <property type="evidence" value="ECO:0007669"/>
    <property type="project" value="UniProtKB-UniRule"/>
</dbReference>
<dbReference type="GO" id="GO:0003677">
    <property type="term" value="F:DNA binding"/>
    <property type="evidence" value="ECO:0007669"/>
    <property type="project" value="UniProtKB-KW"/>
</dbReference>
<dbReference type="GO" id="GO:0004386">
    <property type="term" value="F:helicase activity"/>
    <property type="evidence" value="ECO:0007669"/>
    <property type="project" value="UniProtKB-UniRule"/>
</dbReference>
<dbReference type="GO" id="GO:0016817">
    <property type="term" value="F:hydrolase activity, acting on acid anhydrides"/>
    <property type="evidence" value="ECO:0007669"/>
    <property type="project" value="InterPro"/>
</dbReference>
<dbReference type="GO" id="GO:0006355">
    <property type="term" value="P:regulation of DNA-templated transcription"/>
    <property type="evidence" value="ECO:0007669"/>
    <property type="project" value="UniProtKB-UniRule"/>
</dbReference>
<dbReference type="CDD" id="cd18011">
    <property type="entry name" value="DEXDc_RapA"/>
    <property type="match status" value="1"/>
</dbReference>
<dbReference type="CDD" id="cd18793">
    <property type="entry name" value="SF2_C_SNF"/>
    <property type="match status" value="1"/>
</dbReference>
<dbReference type="FunFam" id="2.30.30.140:FF:000020">
    <property type="entry name" value="RNA polymerase-associated protein RapA"/>
    <property type="match status" value="1"/>
</dbReference>
<dbReference type="FunFam" id="2.30.30.930:FF:000001">
    <property type="entry name" value="RNA polymerase-associated protein RapA"/>
    <property type="match status" value="1"/>
</dbReference>
<dbReference type="FunFam" id="3.30.360.80:FF:000001">
    <property type="entry name" value="RNA polymerase-associated protein RapA"/>
    <property type="match status" value="1"/>
</dbReference>
<dbReference type="FunFam" id="3.40.50.10810:FF:000012">
    <property type="entry name" value="RNA polymerase-associated protein RapA"/>
    <property type="match status" value="1"/>
</dbReference>
<dbReference type="FunFam" id="3.40.50.300:FF:000350">
    <property type="entry name" value="RNA polymerase-associated protein RapA"/>
    <property type="match status" value="1"/>
</dbReference>
<dbReference type="Gene3D" id="2.30.30.140">
    <property type="match status" value="1"/>
</dbReference>
<dbReference type="Gene3D" id="2.30.30.930">
    <property type="match status" value="1"/>
</dbReference>
<dbReference type="Gene3D" id="3.30.360.80">
    <property type="match status" value="1"/>
</dbReference>
<dbReference type="Gene3D" id="6.10.140.1500">
    <property type="match status" value="1"/>
</dbReference>
<dbReference type="Gene3D" id="6.10.140.2230">
    <property type="match status" value="1"/>
</dbReference>
<dbReference type="Gene3D" id="3.40.50.300">
    <property type="entry name" value="P-loop containing nucleotide triphosphate hydrolases"/>
    <property type="match status" value="1"/>
</dbReference>
<dbReference type="Gene3D" id="3.40.50.10810">
    <property type="entry name" value="Tandem AAA-ATPase domain"/>
    <property type="match status" value="1"/>
</dbReference>
<dbReference type="HAMAP" id="MF_01821">
    <property type="entry name" value="Helicase_RapA"/>
    <property type="match status" value="1"/>
</dbReference>
<dbReference type="InterPro" id="IPR014001">
    <property type="entry name" value="Helicase_ATP-bd"/>
</dbReference>
<dbReference type="InterPro" id="IPR001650">
    <property type="entry name" value="Helicase_C-like"/>
</dbReference>
<dbReference type="InterPro" id="IPR023949">
    <property type="entry name" value="Helicase_RapA"/>
</dbReference>
<dbReference type="InterPro" id="IPR027417">
    <property type="entry name" value="P-loop_NTPase"/>
</dbReference>
<dbReference type="InterPro" id="IPR022737">
    <property type="entry name" value="RapA_C"/>
</dbReference>
<dbReference type="InterPro" id="IPR038718">
    <property type="entry name" value="SNF2-like_sf"/>
</dbReference>
<dbReference type="InterPro" id="IPR049730">
    <property type="entry name" value="SNF2/RAD54-like_C"/>
</dbReference>
<dbReference type="InterPro" id="IPR000330">
    <property type="entry name" value="SNF2_N"/>
</dbReference>
<dbReference type="InterPro" id="IPR040765">
    <property type="entry name" value="Tudor_1_RapA"/>
</dbReference>
<dbReference type="InterPro" id="IPR040766">
    <property type="entry name" value="Tudor_2_RapA"/>
</dbReference>
<dbReference type="NCBIfam" id="NF003426">
    <property type="entry name" value="PRK04914.1"/>
    <property type="match status" value="1"/>
</dbReference>
<dbReference type="PANTHER" id="PTHR45766">
    <property type="entry name" value="DNA ANNEALING HELICASE AND ENDONUCLEASE ZRANB3 FAMILY MEMBER"/>
    <property type="match status" value="1"/>
</dbReference>
<dbReference type="PANTHER" id="PTHR45766:SF6">
    <property type="entry name" value="SWI_SNF-RELATED MATRIX-ASSOCIATED ACTIN-DEPENDENT REGULATOR OF CHROMATIN SUBFAMILY A-LIKE PROTEIN 1"/>
    <property type="match status" value="1"/>
</dbReference>
<dbReference type="Pfam" id="PF00271">
    <property type="entry name" value="Helicase_C"/>
    <property type="match status" value="1"/>
</dbReference>
<dbReference type="Pfam" id="PF12137">
    <property type="entry name" value="RapA_C"/>
    <property type="match status" value="1"/>
</dbReference>
<dbReference type="Pfam" id="PF00176">
    <property type="entry name" value="SNF2-rel_dom"/>
    <property type="match status" value="1"/>
</dbReference>
<dbReference type="Pfam" id="PF18339">
    <property type="entry name" value="Tudor_1_RapA"/>
    <property type="match status" value="1"/>
</dbReference>
<dbReference type="Pfam" id="PF18337">
    <property type="entry name" value="Tudor_RapA"/>
    <property type="match status" value="1"/>
</dbReference>
<dbReference type="SMART" id="SM00487">
    <property type="entry name" value="DEXDc"/>
    <property type="match status" value="1"/>
</dbReference>
<dbReference type="SMART" id="SM00490">
    <property type="entry name" value="HELICc"/>
    <property type="match status" value="1"/>
</dbReference>
<dbReference type="SUPFAM" id="SSF52540">
    <property type="entry name" value="P-loop containing nucleoside triphosphate hydrolases"/>
    <property type="match status" value="2"/>
</dbReference>
<dbReference type="PROSITE" id="PS51192">
    <property type="entry name" value="HELICASE_ATP_BIND_1"/>
    <property type="match status" value="1"/>
</dbReference>
<dbReference type="PROSITE" id="PS51194">
    <property type="entry name" value="HELICASE_CTER"/>
    <property type="match status" value="1"/>
</dbReference>
<reference key="1">
    <citation type="journal article" date="2009" name="PLoS Genet.">
        <title>Organised genome dynamics in the Escherichia coli species results in highly diverse adaptive paths.</title>
        <authorList>
            <person name="Touchon M."/>
            <person name="Hoede C."/>
            <person name="Tenaillon O."/>
            <person name="Barbe V."/>
            <person name="Baeriswyl S."/>
            <person name="Bidet P."/>
            <person name="Bingen E."/>
            <person name="Bonacorsi S."/>
            <person name="Bouchier C."/>
            <person name="Bouvet O."/>
            <person name="Calteau A."/>
            <person name="Chiapello H."/>
            <person name="Clermont O."/>
            <person name="Cruveiller S."/>
            <person name="Danchin A."/>
            <person name="Diard M."/>
            <person name="Dossat C."/>
            <person name="Karoui M.E."/>
            <person name="Frapy E."/>
            <person name="Garry L."/>
            <person name="Ghigo J.M."/>
            <person name="Gilles A.M."/>
            <person name="Johnson J."/>
            <person name="Le Bouguenec C."/>
            <person name="Lescat M."/>
            <person name="Mangenot S."/>
            <person name="Martinez-Jehanne V."/>
            <person name="Matic I."/>
            <person name="Nassif X."/>
            <person name="Oztas S."/>
            <person name="Petit M.A."/>
            <person name="Pichon C."/>
            <person name="Rouy Z."/>
            <person name="Ruf C.S."/>
            <person name="Schneider D."/>
            <person name="Tourret J."/>
            <person name="Vacherie B."/>
            <person name="Vallenet D."/>
            <person name="Medigue C."/>
            <person name="Rocha E.P.C."/>
            <person name="Denamur E."/>
        </authorList>
    </citation>
    <scope>NUCLEOTIDE SEQUENCE [LARGE SCALE GENOMIC DNA]</scope>
    <source>
        <strain>IAI39 / ExPEC</strain>
    </source>
</reference>